<sequence>MGQKVNPHGLRVGVIKDWDAKWYANKRDFSDYLIEDHSIRKFVKKKLFLSGINKIETERAANNRVKINVHTAKPGMVIGKGGIGVEELRKELEKMTKKTVIVNVVEVKRPEVESQLVAENIAFSLERRVSFRRAMKQAMQRAMRAGAKGIKVSTAGRLGGADMARTEGYSEGNVPLHTLRADIDYGFAEADTTYGKLGIKVWIYKGEILPTKGKNEETNNETADNSRGRRREAK</sequence>
<protein>
    <recommendedName>
        <fullName evidence="1">Small ribosomal subunit protein uS3</fullName>
    </recommendedName>
    <alternativeName>
        <fullName evidence="3">30S ribosomal protein S3</fullName>
    </alternativeName>
</protein>
<organism>
    <name type="scientific">Alkaliphilus metalliredigens (strain QYMF)</name>
    <dbReference type="NCBI Taxonomy" id="293826"/>
    <lineage>
        <taxon>Bacteria</taxon>
        <taxon>Bacillati</taxon>
        <taxon>Bacillota</taxon>
        <taxon>Clostridia</taxon>
        <taxon>Peptostreptococcales</taxon>
        <taxon>Natronincolaceae</taxon>
        <taxon>Alkaliphilus</taxon>
    </lineage>
</organism>
<reference key="1">
    <citation type="journal article" date="2016" name="Genome Announc.">
        <title>Complete genome sequence of Alkaliphilus metalliredigens strain QYMF, an alkaliphilic and metal-reducing bacterium isolated from borax-contaminated leachate ponds.</title>
        <authorList>
            <person name="Hwang C."/>
            <person name="Copeland A."/>
            <person name="Lucas S."/>
            <person name="Lapidus A."/>
            <person name="Barry K."/>
            <person name="Detter J.C."/>
            <person name="Glavina Del Rio T."/>
            <person name="Hammon N."/>
            <person name="Israni S."/>
            <person name="Dalin E."/>
            <person name="Tice H."/>
            <person name="Pitluck S."/>
            <person name="Chertkov O."/>
            <person name="Brettin T."/>
            <person name="Bruce D."/>
            <person name="Han C."/>
            <person name="Schmutz J."/>
            <person name="Larimer F."/>
            <person name="Land M.L."/>
            <person name="Hauser L."/>
            <person name="Kyrpides N."/>
            <person name="Mikhailova N."/>
            <person name="Ye Q."/>
            <person name="Zhou J."/>
            <person name="Richardson P."/>
            <person name="Fields M.W."/>
        </authorList>
    </citation>
    <scope>NUCLEOTIDE SEQUENCE [LARGE SCALE GENOMIC DNA]</scope>
    <source>
        <strain>QYMF</strain>
    </source>
</reference>
<proteinExistence type="inferred from homology"/>
<accession>A6TWH6</accession>
<evidence type="ECO:0000255" key="1">
    <source>
        <dbReference type="HAMAP-Rule" id="MF_01309"/>
    </source>
</evidence>
<evidence type="ECO:0000256" key="2">
    <source>
        <dbReference type="SAM" id="MobiDB-lite"/>
    </source>
</evidence>
<evidence type="ECO:0000305" key="3"/>
<gene>
    <name evidence="1" type="primary">rpsC</name>
    <name type="ordered locus">Amet_4472</name>
</gene>
<name>RS3_ALKMQ</name>
<keyword id="KW-1185">Reference proteome</keyword>
<keyword id="KW-0687">Ribonucleoprotein</keyword>
<keyword id="KW-0689">Ribosomal protein</keyword>
<keyword id="KW-0694">RNA-binding</keyword>
<keyword id="KW-0699">rRNA-binding</keyword>
<comment type="function">
    <text evidence="1">Binds the lower part of the 30S subunit head. Binds mRNA in the 70S ribosome, positioning it for translation.</text>
</comment>
<comment type="subunit">
    <text evidence="1">Part of the 30S ribosomal subunit. Forms a tight complex with proteins S10 and S14.</text>
</comment>
<comment type="similarity">
    <text evidence="1">Belongs to the universal ribosomal protein uS3 family.</text>
</comment>
<feature type="chain" id="PRO_1000086084" description="Small ribosomal subunit protein uS3">
    <location>
        <begin position="1"/>
        <end position="234"/>
    </location>
</feature>
<feature type="domain" description="KH type-2" evidence="1">
    <location>
        <begin position="39"/>
        <end position="108"/>
    </location>
</feature>
<feature type="region of interest" description="Disordered" evidence="2">
    <location>
        <begin position="212"/>
        <end position="234"/>
    </location>
</feature>
<dbReference type="EMBL" id="CP000724">
    <property type="protein sequence ID" value="ABR50544.1"/>
    <property type="molecule type" value="Genomic_DNA"/>
</dbReference>
<dbReference type="RefSeq" id="WP_012065435.1">
    <property type="nucleotide sequence ID" value="NC_009633.1"/>
</dbReference>
<dbReference type="SMR" id="A6TWH6"/>
<dbReference type="STRING" id="293826.Amet_4472"/>
<dbReference type="KEGG" id="amt:Amet_4472"/>
<dbReference type="eggNOG" id="COG0092">
    <property type="taxonomic scope" value="Bacteria"/>
</dbReference>
<dbReference type="HOGENOM" id="CLU_058591_0_2_9"/>
<dbReference type="OrthoDB" id="9806396at2"/>
<dbReference type="Proteomes" id="UP000001572">
    <property type="component" value="Chromosome"/>
</dbReference>
<dbReference type="GO" id="GO:0022627">
    <property type="term" value="C:cytosolic small ribosomal subunit"/>
    <property type="evidence" value="ECO:0007669"/>
    <property type="project" value="TreeGrafter"/>
</dbReference>
<dbReference type="GO" id="GO:0003729">
    <property type="term" value="F:mRNA binding"/>
    <property type="evidence" value="ECO:0007669"/>
    <property type="project" value="UniProtKB-UniRule"/>
</dbReference>
<dbReference type="GO" id="GO:0019843">
    <property type="term" value="F:rRNA binding"/>
    <property type="evidence" value="ECO:0007669"/>
    <property type="project" value="UniProtKB-UniRule"/>
</dbReference>
<dbReference type="GO" id="GO:0003735">
    <property type="term" value="F:structural constituent of ribosome"/>
    <property type="evidence" value="ECO:0007669"/>
    <property type="project" value="InterPro"/>
</dbReference>
<dbReference type="GO" id="GO:0006412">
    <property type="term" value="P:translation"/>
    <property type="evidence" value="ECO:0007669"/>
    <property type="project" value="UniProtKB-UniRule"/>
</dbReference>
<dbReference type="CDD" id="cd02412">
    <property type="entry name" value="KH-II_30S_S3"/>
    <property type="match status" value="1"/>
</dbReference>
<dbReference type="FunFam" id="3.30.1140.32:FF:000002">
    <property type="entry name" value="30S ribosomal protein S3"/>
    <property type="match status" value="1"/>
</dbReference>
<dbReference type="FunFam" id="3.30.300.20:FF:000001">
    <property type="entry name" value="30S ribosomal protein S3"/>
    <property type="match status" value="1"/>
</dbReference>
<dbReference type="Gene3D" id="3.30.300.20">
    <property type="match status" value="1"/>
</dbReference>
<dbReference type="Gene3D" id="3.30.1140.32">
    <property type="entry name" value="Ribosomal protein S3, C-terminal domain"/>
    <property type="match status" value="1"/>
</dbReference>
<dbReference type="HAMAP" id="MF_01309_B">
    <property type="entry name" value="Ribosomal_uS3_B"/>
    <property type="match status" value="1"/>
</dbReference>
<dbReference type="InterPro" id="IPR004087">
    <property type="entry name" value="KH_dom"/>
</dbReference>
<dbReference type="InterPro" id="IPR015946">
    <property type="entry name" value="KH_dom-like_a/b"/>
</dbReference>
<dbReference type="InterPro" id="IPR004044">
    <property type="entry name" value="KH_dom_type_2"/>
</dbReference>
<dbReference type="InterPro" id="IPR009019">
    <property type="entry name" value="KH_sf_prok-type"/>
</dbReference>
<dbReference type="InterPro" id="IPR036419">
    <property type="entry name" value="Ribosomal_S3_C_sf"/>
</dbReference>
<dbReference type="InterPro" id="IPR005704">
    <property type="entry name" value="Ribosomal_uS3_bac-typ"/>
</dbReference>
<dbReference type="InterPro" id="IPR001351">
    <property type="entry name" value="Ribosomal_uS3_C"/>
</dbReference>
<dbReference type="InterPro" id="IPR018280">
    <property type="entry name" value="Ribosomal_uS3_CS"/>
</dbReference>
<dbReference type="NCBIfam" id="TIGR01009">
    <property type="entry name" value="rpsC_bact"/>
    <property type="match status" value="1"/>
</dbReference>
<dbReference type="PANTHER" id="PTHR11760">
    <property type="entry name" value="30S/40S RIBOSOMAL PROTEIN S3"/>
    <property type="match status" value="1"/>
</dbReference>
<dbReference type="PANTHER" id="PTHR11760:SF19">
    <property type="entry name" value="SMALL RIBOSOMAL SUBUNIT PROTEIN US3C"/>
    <property type="match status" value="1"/>
</dbReference>
<dbReference type="Pfam" id="PF07650">
    <property type="entry name" value="KH_2"/>
    <property type="match status" value="1"/>
</dbReference>
<dbReference type="Pfam" id="PF00189">
    <property type="entry name" value="Ribosomal_S3_C"/>
    <property type="match status" value="1"/>
</dbReference>
<dbReference type="SMART" id="SM00322">
    <property type="entry name" value="KH"/>
    <property type="match status" value="1"/>
</dbReference>
<dbReference type="SUPFAM" id="SSF54814">
    <property type="entry name" value="Prokaryotic type KH domain (KH-domain type II)"/>
    <property type="match status" value="1"/>
</dbReference>
<dbReference type="SUPFAM" id="SSF54821">
    <property type="entry name" value="Ribosomal protein S3 C-terminal domain"/>
    <property type="match status" value="1"/>
</dbReference>
<dbReference type="PROSITE" id="PS50823">
    <property type="entry name" value="KH_TYPE_2"/>
    <property type="match status" value="1"/>
</dbReference>
<dbReference type="PROSITE" id="PS00548">
    <property type="entry name" value="RIBOSOMAL_S3"/>
    <property type="match status" value="1"/>
</dbReference>